<dbReference type="EMBL" id="CP000252">
    <property type="protein sequence ID" value="ABC78208.1"/>
    <property type="molecule type" value="Genomic_DNA"/>
</dbReference>
<dbReference type="RefSeq" id="WP_011418227.1">
    <property type="nucleotide sequence ID" value="NC_007759.1"/>
</dbReference>
<dbReference type="SMR" id="Q2LVU9"/>
<dbReference type="FunCoup" id="Q2LVU9">
    <property type="interactions" value="510"/>
</dbReference>
<dbReference type="STRING" id="56780.SYN_00765"/>
<dbReference type="KEGG" id="sat:SYN_00765"/>
<dbReference type="eggNOG" id="COG0228">
    <property type="taxonomic scope" value="Bacteria"/>
</dbReference>
<dbReference type="HOGENOM" id="CLU_100590_5_0_7"/>
<dbReference type="InParanoid" id="Q2LVU9"/>
<dbReference type="OrthoDB" id="9807878at2"/>
<dbReference type="Proteomes" id="UP000001933">
    <property type="component" value="Chromosome"/>
</dbReference>
<dbReference type="GO" id="GO:0005737">
    <property type="term" value="C:cytoplasm"/>
    <property type="evidence" value="ECO:0007669"/>
    <property type="project" value="UniProtKB-ARBA"/>
</dbReference>
<dbReference type="GO" id="GO:0015935">
    <property type="term" value="C:small ribosomal subunit"/>
    <property type="evidence" value="ECO:0007669"/>
    <property type="project" value="TreeGrafter"/>
</dbReference>
<dbReference type="GO" id="GO:0003735">
    <property type="term" value="F:structural constituent of ribosome"/>
    <property type="evidence" value="ECO:0007669"/>
    <property type="project" value="InterPro"/>
</dbReference>
<dbReference type="GO" id="GO:0006412">
    <property type="term" value="P:translation"/>
    <property type="evidence" value="ECO:0007669"/>
    <property type="project" value="UniProtKB-UniRule"/>
</dbReference>
<dbReference type="Gene3D" id="3.30.1320.10">
    <property type="match status" value="1"/>
</dbReference>
<dbReference type="HAMAP" id="MF_00385">
    <property type="entry name" value="Ribosomal_bS16"/>
    <property type="match status" value="1"/>
</dbReference>
<dbReference type="InterPro" id="IPR000307">
    <property type="entry name" value="Ribosomal_bS16"/>
</dbReference>
<dbReference type="InterPro" id="IPR020592">
    <property type="entry name" value="Ribosomal_bS16_CS"/>
</dbReference>
<dbReference type="InterPro" id="IPR023803">
    <property type="entry name" value="Ribosomal_bS16_dom_sf"/>
</dbReference>
<dbReference type="NCBIfam" id="TIGR00002">
    <property type="entry name" value="S16"/>
    <property type="match status" value="1"/>
</dbReference>
<dbReference type="PANTHER" id="PTHR12919">
    <property type="entry name" value="30S RIBOSOMAL PROTEIN S16"/>
    <property type="match status" value="1"/>
</dbReference>
<dbReference type="PANTHER" id="PTHR12919:SF20">
    <property type="entry name" value="SMALL RIBOSOMAL SUBUNIT PROTEIN BS16M"/>
    <property type="match status" value="1"/>
</dbReference>
<dbReference type="Pfam" id="PF00886">
    <property type="entry name" value="Ribosomal_S16"/>
    <property type="match status" value="1"/>
</dbReference>
<dbReference type="SUPFAM" id="SSF54565">
    <property type="entry name" value="Ribosomal protein S16"/>
    <property type="match status" value="1"/>
</dbReference>
<dbReference type="PROSITE" id="PS00732">
    <property type="entry name" value="RIBOSOMAL_S16"/>
    <property type="match status" value="1"/>
</dbReference>
<evidence type="ECO:0000255" key="1">
    <source>
        <dbReference type="HAMAP-Rule" id="MF_00385"/>
    </source>
</evidence>
<evidence type="ECO:0000305" key="2"/>
<proteinExistence type="inferred from homology"/>
<gene>
    <name evidence="1" type="primary">rpsP</name>
    <name type="ordered locus">SYNAS_23290</name>
    <name type="ORF">SYN_00765</name>
</gene>
<sequence length="83" mass="9212">MAVKIRLARMGAKKKPFYRIVVSDSESPRDGRFLEIVGNYDPGKDPAEVNVKESRLLEWLSKGAKPTLTVSQLLQKKGIKVGA</sequence>
<name>RS16_SYNAS</name>
<comment type="similarity">
    <text evidence="1">Belongs to the bacterial ribosomal protein bS16 family.</text>
</comment>
<protein>
    <recommendedName>
        <fullName evidence="1">Small ribosomal subunit protein bS16</fullName>
    </recommendedName>
    <alternativeName>
        <fullName evidence="2">30S ribosomal protein S16</fullName>
    </alternativeName>
</protein>
<organism>
    <name type="scientific">Syntrophus aciditrophicus (strain SB)</name>
    <dbReference type="NCBI Taxonomy" id="56780"/>
    <lineage>
        <taxon>Bacteria</taxon>
        <taxon>Pseudomonadati</taxon>
        <taxon>Thermodesulfobacteriota</taxon>
        <taxon>Syntrophia</taxon>
        <taxon>Syntrophales</taxon>
        <taxon>Syntrophaceae</taxon>
        <taxon>Syntrophus</taxon>
    </lineage>
</organism>
<accession>Q2LVU9</accession>
<reference key="1">
    <citation type="journal article" date="2007" name="Proc. Natl. Acad. Sci. U.S.A.">
        <title>The genome of Syntrophus aciditrophicus: life at the thermodynamic limit of microbial growth.</title>
        <authorList>
            <person name="McInerney M.J."/>
            <person name="Rohlin L."/>
            <person name="Mouttaki H."/>
            <person name="Kim U."/>
            <person name="Krupp R.S."/>
            <person name="Rios-Hernandez L."/>
            <person name="Sieber J."/>
            <person name="Struchtemeyer C.G."/>
            <person name="Bhattacharyya A."/>
            <person name="Campbell J.W."/>
            <person name="Gunsalus R.P."/>
        </authorList>
    </citation>
    <scope>NUCLEOTIDE SEQUENCE [LARGE SCALE GENOMIC DNA]</scope>
    <source>
        <strain>SB</strain>
    </source>
</reference>
<keyword id="KW-1185">Reference proteome</keyword>
<keyword id="KW-0687">Ribonucleoprotein</keyword>
<keyword id="KW-0689">Ribosomal protein</keyword>
<feature type="chain" id="PRO_0000243887" description="Small ribosomal subunit protein bS16">
    <location>
        <begin position="1"/>
        <end position="83"/>
    </location>
</feature>